<protein>
    <recommendedName>
        <fullName>HTH-type transcriptional regulator Mce2R</fullName>
    </recommendedName>
</protein>
<name>MCE2R_MYCTO</name>
<evidence type="ECO:0000250" key="1"/>
<evidence type="ECO:0000255" key="2">
    <source>
        <dbReference type="PROSITE-ProRule" id="PRU00307"/>
    </source>
</evidence>
<sequence length="240" mass="26509">MALQPVTRRSVPEEVFEQIATDVLTGEMPPGEALPSERRLAELLGVSRPAVREALKRLSAAGLVEVRQGDVTTVRDFRRHAGLDLLPRLLFRNGELDISVVRSILEARLRNFPKVAELAAERNEPELAELLQDSLRALDTEEDPIVWQRHTLDFWDHVVDSAGSIVDRLMYNAFRAAYEPTLAALTTTMTAAAKRPSDYRKLADAICSGDPTGAKKAAQDLLELANTSLMAVLVSQASRQ</sequence>
<accession>P9WMG4</accession>
<accession>L0T5T5</accession>
<accession>O07792</accession>
<accession>P67741</accession>
<feature type="chain" id="PRO_0000427308" description="HTH-type transcriptional regulator Mce2R">
    <location>
        <begin position="1"/>
        <end position="240"/>
    </location>
</feature>
<feature type="domain" description="HTH gntR-type" evidence="2">
    <location>
        <begin position="9"/>
        <end position="77"/>
    </location>
</feature>
<feature type="DNA-binding region" description="H-T-H motif" evidence="2">
    <location>
        <begin position="37"/>
        <end position="56"/>
    </location>
</feature>
<proteinExistence type="inferred from homology"/>
<comment type="function">
    <text evidence="1">Negatively regulates the expression of its operon as well as expression of end (endonuclease 4).</text>
</comment>
<reference key="1">
    <citation type="journal article" date="2002" name="J. Bacteriol.">
        <title>Whole-genome comparison of Mycobacterium tuberculosis clinical and laboratory strains.</title>
        <authorList>
            <person name="Fleischmann R.D."/>
            <person name="Alland D."/>
            <person name="Eisen J.A."/>
            <person name="Carpenter L."/>
            <person name="White O."/>
            <person name="Peterson J.D."/>
            <person name="DeBoy R.T."/>
            <person name="Dodson R.J."/>
            <person name="Gwinn M.L."/>
            <person name="Haft D.H."/>
            <person name="Hickey E.K."/>
            <person name="Kolonay J.F."/>
            <person name="Nelson W.C."/>
            <person name="Umayam L.A."/>
            <person name="Ermolaeva M.D."/>
            <person name="Salzberg S.L."/>
            <person name="Delcher A."/>
            <person name="Utterback T.R."/>
            <person name="Weidman J.F."/>
            <person name="Khouri H.M."/>
            <person name="Gill J."/>
            <person name="Mikula A."/>
            <person name="Bishai W."/>
            <person name="Jacobs W.R. Jr."/>
            <person name="Venter J.C."/>
            <person name="Fraser C.M."/>
        </authorList>
    </citation>
    <scope>NUCLEOTIDE SEQUENCE [LARGE SCALE GENOMIC DNA]</scope>
    <source>
        <strain>CDC 1551 / Oshkosh</strain>
    </source>
</reference>
<organism>
    <name type="scientific">Mycobacterium tuberculosis (strain CDC 1551 / Oshkosh)</name>
    <dbReference type="NCBI Taxonomy" id="83331"/>
    <lineage>
        <taxon>Bacteria</taxon>
        <taxon>Bacillati</taxon>
        <taxon>Actinomycetota</taxon>
        <taxon>Actinomycetes</taxon>
        <taxon>Mycobacteriales</taxon>
        <taxon>Mycobacteriaceae</taxon>
        <taxon>Mycobacterium</taxon>
        <taxon>Mycobacterium tuberculosis complex</taxon>
    </lineage>
</organism>
<dbReference type="EMBL" id="AE000516">
    <property type="protein sequence ID" value="AAK44839.1"/>
    <property type="molecule type" value="Genomic_DNA"/>
</dbReference>
<dbReference type="PIR" id="E70907">
    <property type="entry name" value="E70907"/>
</dbReference>
<dbReference type="RefSeq" id="WP_003403065.1">
    <property type="nucleotide sequence ID" value="NZ_KK341227.1"/>
</dbReference>
<dbReference type="SMR" id="P9WMG4"/>
<dbReference type="KEGG" id="mtc:MT0615"/>
<dbReference type="PATRIC" id="fig|83331.31.peg.647"/>
<dbReference type="HOGENOM" id="CLU_017584_9_4_11"/>
<dbReference type="Proteomes" id="UP000001020">
    <property type="component" value="Chromosome"/>
</dbReference>
<dbReference type="GO" id="GO:0003677">
    <property type="term" value="F:DNA binding"/>
    <property type="evidence" value="ECO:0007669"/>
    <property type="project" value="UniProtKB-KW"/>
</dbReference>
<dbReference type="GO" id="GO:0003700">
    <property type="term" value="F:DNA-binding transcription factor activity"/>
    <property type="evidence" value="ECO:0007669"/>
    <property type="project" value="InterPro"/>
</dbReference>
<dbReference type="CDD" id="cd07377">
    <property type="entry name" value="WHTH_GntR"/>
    <property type="match status" value="1"/>
</dbReference>
<dbReference type="FunFam" id="1.10.10.10:FF:000693">
    <property type="entry name" value="GntR family transcriptional regulator"/>
    <property type="match status" value="1"/>
</dbReference>
<dbReference type="Gene3D" id="1.20.120.530">
    <property type="entry name" value="GntR ligand-binding domain-like"/>
    <property type="match status" value="1"/>
</dbReference>
<dbReference type="Gene3D" id="1.10.10.10">
    <property type="entry name" value="Winged helix-like DNA-binding domain superfamily/Winged helix DNA-binding domain"/>
    <property type="match status" value="1"/>
</dbReference>
<dbReference type="InterPro" id="IPR011711">
    <property type="entry name" value="GntR_C"/>
</dbReference>
<dbReference type="InterPro" id="IPR008920">
    <property type="entry name" value="TF_FadR/GntR_C"/>
</dbReference>
<dbReference type="InterPro" id="IPR000524">
    <property type="entry name" value="Tscrpt_reg_HTH_GntR"/>
</dbReference>
<dbReference type="InterPro" id="IPR036388">
    <property type="entry name" value="WH-like_DNA-bd_sf"/>
</dbReference>
<dbReference type="InterPro" id="IPR036390">
    <property type="entry name" value="WH_DNA-bd_sf"/>
</dbReference>
<dbReference type="PANTHER" id="PTHR43537:SF24">
    <property type="entry name" value="GLUCONATE OPERON TRANSCRIPTIONAL REPRESSOR"/>
    <property type="match status" value="1"/>
</dbReference>
<dbReference type="PANTHER" id="PTHR43537">
    <property type="entry name" value="TRANSCRIPTIONAL REGULATOR, GNTR FAMILY"/>
    <property type="match status" value="1"/>
</dbReference>
<dbReference type="Pfam" id="PF07729">
    <property type="entry name" value="FCD"/>
    <property type="match status" value="1"/>
</dbReference>
<dbReference type="Pfam" id="PF00392">
    <property type="entry name" value="GntR"/>
    <property type="match status" value="1"/>
</dbReference>
<dbReference type="PRINTS" id="PR00035">
    <property type="entry name" value="HTHGNTR"/>
</dbReference>
<dbReference type="SMART" id="SM00895">
    <property type="entry name" value="FCD"/>
    <property type="match status" value="1"/>
</dbReference>
<dbReference type="SMART" id="SM00345">
    <property type="entry name" value="HTH_GNTR"/>
    <property type="match status" value="1"/>
</dbReference>
<dbReference type="SUPFAM" id="SSF48008">
    <property type="entry name" value="GntR ligand-binding domain-like"/>
    <property type="match status" value="1"/>
</dbReference>
<dbReference type="SUPFAM" id="SSF46785">
    <property type="entry name" value="Winged helix' DNA-binding domain"/>
    <property type="match status" value="1"/>
</dbReference>
<dbReference type="PROSITE" id="PS50949">
    <property type="entry name" value="HTH_GNTR"/>
    <property type="match status" value="1"/>
</dbReference>
<keyword id="KW-0238">DNA-binding</keyword>
<keyword id="KW-1185">Reference proteome</keyword>
<keyword id="KW-0678">Repressor</keyword>
<keyword id="KW-0804">Transcription</keyword>
<keyword id="KW-0805">Transcription regulation</keyword>
<gene>
    <name type="primary">mce2R</name>
    <name type="ordered locus">MT0615</name>
</gene>